<protein>
    <recommendedName>
        <fullName>Vetispiradiene synthase 1</fullName>
        <shortName>HVS1</shortName>
        <ecNumber>4.2.3.21</ecNumber>
    </recommendedName>
</protein>
<sequence>MAPAIVMSNYEEEEIVRPVADFSPSLWGDHFHSFSVDNQVAEKYAQEIETLKEQTSTMLSAACGTTLTEKLNLIDIIERLGIAYHFEKQIEDMLDHIYRADPYFEAHEYNDLNTSSVQFRLLRQHGYNVSPNIFSRFQDANGKFKESLRSDIRGLLNLYEASHVRTHKEDILEEALVFSVGHLESAAPHLKSPLSKQVTHALEQSLHKSIPRVEIRYFISIYEEEEFKNDLLLRFAKLDYNLLQMLHKHELSEVSRWWKDLDFVTTLPYARDRAVECYFWTMGVYAEPQYSQARVMLAKTIAMISIVDDTFDAYGIVKELEVYTDAIQRWDISQIDRLPEYMKISYKALLDLYDDYEKELSKDGRSDVVHYAKERMKEIVGNYFIEGKWFIEGYMPSVSEYLSNALATSTYYLLTTTSYLGMKSATKEHFEWLATNPKILEANATLCRVVDDIATYEVEKGRGQIATGIECYMRDYGVSTEVAMEKFQEMADIAWKDVNEEILRPTPVSSEILTRILNLARIIDVTYKHNQDGYTHPEKVLKPHIIALVVDSIDI</sequence>
<accession>Q39978</accession>
<dbReference type="EC" id="4.2.3.21"/>
<dbReference type="EMBL" id="U20188">
    <property type="protein sequence ID" value="AAA86337.1"/>
    <property type="molecule type" value="mRNA"/>
</dbReference>
<dbReference type="PIR" id="A56118">
    <property type="entry name" value="A56118"/>
</dbReference>
<dbReference type="PDB" id="5JO7">
    <property type="method" value="X-ray"/>
    <property type="resolution" value="2.15 A"/>
    <property type="chains" value="A/B/C/D=23-555"/>
</dbReference>
<dbReference type="PDBsum" id="5JO7"/>
<dbReference type="SMR" id="Q39978"/>
<dbReference type="KEGG" id="ag:AAA86337"/>
<dbReference type="BioCyc" id="MetaCyc:VS1-MONOMER"/>
<dbReference type="UniPathway" id="UPA00213"/>
<dbReference type="GO" id="GO:0005737">
    <property type="term" value="C:cytoplasm"/>
    <property type="evidence" value="ECO:0007669"/>
    <property type="project" value="UniProtKB-SubCell"/>
</dbReference>
<dbReference type="GO" id="GO:0000287">
    <property type="term" value="F:magnesium ion binding"/>
    <property type="evidence" value="ECO:0007669"/>
    <property type="project" value="InterPro"/>
</dbReference>
<dbReference type="GO" id="GO:0034003">
    <property type="term" value="F:vetispiradiene synthase activity"/>
    <property type="evidence" value="ECO:0007669"/>
    <property type="project" value="UniProtKB-EC"/>
</dbReference>
<dbReference type="GO" id="GO:0016102">
    <property type="term" value="P:diterpenoid biosynthetic process"/>
    <property type="evidence" value="ECO:0007669"/>
    <property type="project" value="InterPro"/>
</dbReference>
<dbReference type="CDD" id="cd00684">
    <property type="entry name" value="Terpene_cyclase_plant_C1"/>
    <property type="match status" value="1"/>
</dbReference>
<dbReference type="FunFam" id="1.10.600.10:FF:000007">
    <property type="entry name" value="Isoprene synthase, chloroplastic"/>
    <property type="match status" value="1"/>
</dbReference>
<dbReference type="FunFam" id="1.50.10.130:FF:000001">
    <property type="entry name" value="Isoprene synthase, chloroplastic"/>
    <property type="match status" value="1"/>
</dbReference>
<dbReference type="Gene3D" id="1.10.600.10">
    <property type="entry name" value="Farnesyl Diphosphate Synthase"/>
    <property type="match status" value="1"/>
</dbReference>
<dbReference type="Gene3D" id="1.50.10.130">
    <property type="entry name" value="Terpene synthase, N-terminal domain"/>
    <property type="match status" value="1"/>
</dbReference>
<dbReference type="InterPro" id="IPR008949">
    <property type="entry name" value="Isoprenoid_synthase_dom_sf"/>
</dbReference>
<dbReference type="InterPro" id="IPR034741">
    <property type="entry name" value="Terpene_cyclase-like_1_C"/>
</dbReference>
<dbReference type="InterPro" id="IPR044814">
    <property type="entry name" value="Terpene_cyclase_plant_C1"/>
</dbReference>
<dbReference type="InterPro" id="IPR001906">
    <property type="entry name" value="Terpene_synth_N"/>
</dbReference>
<dbReference type="InterPro" id="IPR036965">
    <property type="entry name" value="Terpene_synth_N_sf"/>
</dbReference>
<dbReference type="InterPro" id="IPR050148">
    <property type="entry name" value="Terpene_synthase-like"/>
</dbReference>
<dbReference type="InterPro" id="IPR005630">
    <property type="entry name" value="Terpene_synthase_metal-bd"/>
</dbReference>
<dbReference type="InterPro" id="IPR008930">
    <property type="entry name" value="Terpenoid_cyclase/PrenylTrfase"/>
</dbReference>
<dbReference type="PANTHER" id="PTHR31225">
    <property type="entry name" value="OS04G0344100 PROTEIN-RELATED"/>
    <property type="match status" value="1"/>
</dbReference>
<dbReference type="PANTHER" id="PTHR31225:SF253">
    <property type="entry name" value="SESQUITERPENE SYNTHASE 31"/>
    <property type="match status" value="1"/>
</dbReference>
<dbReference type="Pfam" id="PF01397">
    <property type="entry name" value="Terpene_synth"/>
    <property type="match status" value="1"/>
</dbReference>
<dbReference type="Pfam" id="PF03936">
    <property type="entry name" value="Terpene_synth_C"/>
    <property type="match status" value="1"/>
</dbReference>
<dbReference type="SFLD" id="SFLDG01019">
    <property type="entry name" value="Terpene_Cyclase_Like_1_C_Termi"/>
    <property type="match status" value="1"/>
</dbReference>
<dbReference type="SFLD" id="SFLDG01604">
    <property type="entry name" value="Terpene_Cyclase_Like_1_C_Termi"/>
    <property type="match status" value="1"/>
</dbReference>
<dbReference type="SFLD" id="SFLDG01014">
    <property type="entry name" value="Terpene_Cyclase_Like_1_N-term"/>
    <property type="match status" value="1"/>
</dbReference>
<dbReference type="SUPFAM" id="SSF48239">
    <property type="entry name" value="Terpenoid cyclases/Protein prenyltransferases"/>
    <property type="match status" value="1"/>
</dbReference>
<dbReference type="SUPFAM" id="SSF48576">
    <property type="entry name" value="Terpenoid synthases"/>
    <property type="match status" value="1"/>
</dbReference>
<comment type="function">
    <text>Sesquiterpene synthase that catalyzes the formation of vetispiradiene from trans,trans-farnesyl diphosphate. The initial internal cyclization produces the monocyclic intermediate germacrene A.</text>
</comment>
<comment type="catalytic activity">
    <reaction evidence="2">
        <text>(2E,6E)-farnesyl diphosphate = (-)-vetispiradiene + diphosphate</text>
        <dbReference type="Rhea" id="RHEA:10340"/>
        <dbReference type="ChEBI" id="CHEBI:33019"/>
        <dbReference type="ChEBI" id="CHEBI:46971"/>
        <dbReference type="ChEBI" id="CHEBI:175763"/>
        <dbReference type="EC" id="4.2.3.21"/>
    </reaction>
</comment>
<comment type="cofactor">
    <cofactor evidence="1">
        <name>Mg(2+)</name>
        <dbReference type="ChEBI" id="CHEBI:18420"/>
    </cofactor>
    <text evidence="1">Binds 3 Mg(2+) ions per subunit.</text>
</comment>
<comment type="pathway">
    <text>Secondary metabolite biosynthesis; terpenoid biosynthesis.</text>
</comment>
<comment type="subcellular location">
    <subcellularLocation>
        <location evidence="3">Cytoplasm</location>
    </subcellularLocation>
</comment>
<comment type="induction">
    <text evidence="2">By elicitor from R.solani.</text>
</comment>
<comment type="domain">
    <text>The Asp-Asp-Xaa-Xaa-Asp/Glu (DDXXD/E) motif is important for the catalytic activity, presumably through binding to Mg(2+).</text>
</comment>
<comment type="similarity">
    <text evidence="3">Belongs to the terpene synthase family. Tpsa subfamily.</text>
</comment>
<name>VTSS1_HYOMU</name>
<proteinExistence type="evidence at protein level"/>
<keyword id="KW-0002">3D-structure</keyword>
<keyword id="KW-0963">Cytoplasm</keyword>
<keyword id="KW-0456">Lyase</keyword>
<keyword id="KW-0460">Magnesium</keyword>
<keyword id="KW-0479">Metal-binding</keyword>
<organism>
    <name type="scientific">Hyoscyamus muticus</name>
    <name type="common">Egyptian henbane</name>
    <dbReference type="NCBI Taxonomy" id="35626"/>
    <lineage>
        <taxon>Eukaryota</taxon>
        <taxon>Viridiplantae</taxon>
        <taxon>Streptophyta</taxon>
        <taxon>Embryophyta</taxon>
        <taxon>Tracheophyta</taxon>
        <taxon>Spermatophyta</taxon>
        <taxon>Magnoliopsida</taxon>
        <taxon>eudicotyledons</taxon>
        <taxon>Gunneridae</taxon>
        <taxon>Pentapetalae</taxon>
        <taxon>asterids</taxon>
        <taxon>lamiids</taxon>
        <taxon>Solanales</taxon>
        <taxon>Solanaceae</taxon>
        <taxon>Solanoideae</taxon>
        <taxon>Hyoscyameae</taxon>
        <taxon>Hyoscyamus</taxon>
    </lineage>
</organism>
<reference key="1">
    <citation type="journal article" date="1995" name="J. Biol. Chem.">
        <title>Cloning and bacterial expression of a sesquiterpene cyclase from Hyoscyamus muticus and its molecular comparison to related terpene cyclases.</title>
        <authorList>
            <person name="Back K."/>
            <person name="Chappell J."/>
        </authorList>
    </citation>
    <scope>NUCLEOTIDE SEQUENCE [MRNA] OF 36-555</scope>
    <scope>CATALYTIC ACTIVITY</scope>
    <scope>INDUCTION BY ELICITOR</scope>
</reference>
<reference key="2">
    <citation type="unpublished observations" date="1995-01">
        <authorList>
            <person name="Chappell J."/>
        </authorList>
    </citation>
    <scope>CONCEPTUAL TRANSLATION</scope>
</reference>
<evidence type="ECO:0000250" key="1"/>
<evidence type="ECO:0000269" key="2">
    <source>
    </source>
</evidence>
<evidence type="ECO:0000305" key="3"/>
<evidence type="ECO:0007829" key="4">
    <source>
        <dbReference type="PDB" id="5JO7"/>
    </source>
</evidence>
<feature type="chain" id="PRO_0000398184" description="Vetispiradiene synthase 1">
    <location>
        <begin position="1"/>
        <end position="555"/>
    </location>
</feature>
<feature type="short sequence motif" description="DDXXD motif">
    <location>
        <begin position="308"/>
        <end position="312"/>
    </location>
</feature>
<feature type="binding site" evidence="1">
    <location>
        <position position="308"/>
    </location>
    <ligand>
        <name>Mg(2+)</name>
        <dbReference type="ChEBI" id="CHEBI:18420"/>
        <label>1</label>
    </ligand>
</feature>
<feature type="binding site" evidence="1">
    <location>
        <position position="308"/>
    </location>
    <ligand>
        <name>Mg(2+)</name>
        <dbReference type="ChEBI" id="CHEBI:18420"/>
        <label>2</label>
    </ligand>
</feature>
<feature type="binding site" evidence="1">
    <location>
        <position position="312"/>
    </location>
    <ligand>
        <name>Mg(2+)</name>
        <dbReference type="ChEBI" id="CHEBI:18420"/>
        <label>1</label>
    </ligand>
</feature>
<feature type="binding site" evidence="1">
    <location>
        <position position="312"/>
    </location>
    <ligand>
        <name>Mg(2+)</name>
        <dbReference type="ChEBI" id="CHEBI:18420"/>
        <label>2</label>
    </ligand>
</feature>
<feature type="binding site" evidence="1">
    <location>
        <position position="451"/>
    </location>
    <ligand>
        <name>Mg(2+)</name>
        <dbReference type="ChEBI" id="CHEBI:18420"/>
        <label>3</label>
    </ligand>
</feature>
<feature type="binding site" evidence="1">
    <location>
        <position position="455"/>
    </location>
    <ligand>
        <name>Mg(2+)</name>
        <dbReference type="ChEBI" id="CHEBI:18420"/>
        <label>3</label>
    </ligand>
</feature>
<feature type="binding site" evidence="1">
    <location>
        <position position="459"/>
    </location>
    <ligand>
        <name>Mg(2+)</name>
        <dbReference type="ChEBI" id="CHEBI:18420"/>
        <label>3</label>
    </ligand>
</feature>
<feature type="helix" evidence="4">
    <location>
        <begin position="38"/>
        <end position="60"/>
    </location>
</feature>
<feature type="turn" evidence="4">
    <location>
        <begin position="61"/>
        <end position="64"/>
    </location>
</feature>
<feature type="helix" evidence="4">
    <location>
        <begin position="67"/>
        <end position="79"/>
    </location>
</feature>
<feature type="helix" evidence="4">
    <location>
        <begin position="83"/>
        <end position="86"/>
    </location>
</feature>
<feature type="helix" evidence="4">
    <location>
        <begin position="87"/>
        <end position="100"/>
    </location>
</feature>
<feature type="helix" evidence="4">
    <location>
        <begin position="107"/>
        <end position="110"/>
    </location>
</feature>
<feature type="helix" evidence="4">
    <location>
        <begin position="112"/>
        <end position="124"/>
    </location>
</feature>
<feature type="helix" evidence="4">
    <location>
        <begin position="131"/>
        <end position="137"/>
    </location>
</feature>
<feature type="helix" evidence="4">
    <location>
        <begin position="146"/>
        <end position="150"/>
    </location>
</feature>
<feature type="helix" evidence="4">
    <location>
        <begin position="152"/>
        <end position="162"/>
    </location>
</feature>
<feature type="helix" evidence="4">
    <location>
        <begin position="170"/>
        <end position="186"/>
    </location>
</feature>
<feature type="helix" evidence="4">
    <location>
        <begin position="187"/>
        <end position="189"/>
    </location>
</feature>
<feature type="helix" evidence="4">
    <location>
        <begin position="194"/>
        <end position="203"/>
    </location>
</feature>
<feature type="helix" evidence="4">
    <location>
        <begin position="206"/>
        <end position="208"/>
    </location>
</feature>
<feature type="helix" evidence="4">
    <location>
        <begin position="211"/>
        <end position="224"/>
    </location>
</feature>
<feature type="helix" evidence="4">
    <location>
        <begin position="230"/>
        <end position="261"/>
    </location>
</feature>
<feature type="helix" evidence="4">
    <location>
        <begin position="263"/>
        <end position="266"/>
    </location>
</feature>
<feature type="helix" evidence="4">
    <location>
        <begin position="274"/>
        <end position="284"/>
    </location>
</feature>
<feature type="helix" evidence="4">
    <location>
        <begin position="288"/>
        <end position="290"/>
    </location>
</feature>
<feature type="helix" evidence="4">
    <location>
        <begin position="291"/>
        <end position="312"/>
    </location>
</feature>
<feature type="helix" evidence="4">
    <location>
        <begin position="317"/>
        <end position="329"/>
    </location>
</feature>
<feature type="helix" evidence="4">
    <location>
        <begin position="332"/>
        <end position="337"/>
    </location>
</feature>
<feature type="helix" evidence="4">
    <location>
        <begin position="340"/>
        <end position="361"/>
    </location>
</feature>
<feature type="turn" evidence="4">
    <location>
        <begin position="362"/>
        <end position="364"/>
    </location>
</feature>
<feature type="helix" evidence="4">
    <location>
        <begin position="366"/>
        <end position="368"/>
    </location>
</feature>
<feature type="helix" evidence="4">
    <location>
        <begin position="369"/>
        <end position="392"/>
    </location>
</feature>
<feature type="helix" evidence="4">
    <location>
        <begin position="398"/>
        <end position="405"/>
    </location>
</feature>
<feature type="helix" evidence="4">
    <location>
        <begin position="407"/>
        <end position="409"/>
    </location>
</feature>
<feature type="helix" evidence="4">
    <location>
        <begin position="411"/>
        <end position="417"/>
    </location>
</feature>
<feature type="turn" evidence="4">
    <location>
        <begin position="418"/>
        <end position="421"/>
    </location>
</feature>
<feature type="helix" evidence="4">
    <location>
        <begin position="427"/>
        <end position="434"/>
    </location>
</feature>
<feature type="helix" evidence="4">
    <location>
        <begin position="438"/>
        <end position="459"/>
    </location>
</feature>
<feature type="strand" evidence="4">
    <location>
        <begin position="461"/>
        <end position="465"/>
    </location>
</feature>
<feature type="helix" evidence="4">
    <location>
        <begin position="468"/>
        <end position="476"/>
    </location>
</feature>
<feature type="helix" evidence="4">
    <location>
        <begin position="480"/>
        <end position="501"/>
    </location>
</feature>
<feature type="strand" evidence="4">
    <location>
        <begin position="503"/>
        <end position="505"/>
    </location>
</feature>
<feature type="helix" evidence="4">
    <location>
        <begin position="510"/>
        <end position="526"/>
    </location>
</feature>
<feature type="helix" evidence="4">
    <location>
        <begin position="542"/>
        <end position="549"/>
    </location>
</feature>